<comment type="similarity">
    <text evidence="1">Belongs to the baculoviridae p33 family.</text>
</comment>
<organism>
    <name type="scientific">Orgyia pseudotsugata multicapsid polyhedrosis virus</name>
    <name type="common">OpMNPV</name>
    <dbReference type="NCBI Taxonomy" id="262177"/>
    <lineage>
        <taxon>Viruses</taxon>
        <taxon>Viruses incertae sedis</taxon>
        <taxon>Naldaviricetes</taxon>
        <taxon>Lefavirales</taxon>
        <taxon>Baculoviridae</taxon>
        <taxon>Alphabaculovirus</taxon>
        <taxon>Alphabaculovirus orpseudotsugatae</taxon>
    </lineage>
</organism>
<gene>
    <name type="primary">P33</name>
    <name type="ORF">ORF93</name>
</gene>
<proteinExistence type="inferred from homology"/>
<accession>Q06372</accession>
<organismHost>
    <name type="scientific">Orgyia pseudotsugata</name>
    <name type="common">Douglas-fir tussock moth</name>
    <dbReference type="NCBI Taxonomy" id="33414"/>
</organismHost>
<name>VP33_NPVOP</name>
<keyword id="KW-0244">Early protein</keyword>
<keyword id="KW-1185">Reference proteome</keyword>
<evidence type="ECO:0000305" key="1"/>
<sequence>MIPLTPLFSRYKDSYLLYAFRLIDLLRASKSAHLTRLLSLQATYLYHFACLIKYKDVQKYEVQQLIEWAASAPPDIDLQQFRVEFMDNTAELNLRSCQPKSFMYTFTTIWDTIHFLSLIIDDMVATREKSSLDFVAQQLKTMKVLFYNIFFILQCAMCRDHYMNVKGYIIYHIERIDVALEKERYGAPITFSESYCEETIENARQDTQDLEGPPTKRARLADTLEHADSTTAANVLMRNLMAYVSMTFHNHINDYKWIQRNQKPPLHQERMTWVRYKKALNL</sequence>
<reference key="1">
    <citation type="journal article" date="1993" name="Virology">
        <title>A 25-kDa protein is associated with the envelopes of occluded baculovirus virions.</title>
        <authorList>
            <person name="Russell R.L.Q."/>
            <person name="Rohrmann G.F."/>
        </authorList>
    </citation>
    <scope>NUCLEOTIDE SEQUENCE [GENOMIC DNA]</scope>
</reference>
<reference key="2">
    <citation type="journal article" date="1997" name="Virology">
        <title>The sequence of the Orgyia pseudotsugata multinucleocapsid nuclear polyhedrosis virus genome.</title>
        <authorList>
            <person name="Ahrens C.H."/>
            <person name="Russell R.R."/>
            <person name="Funk C.J."/>
            <person name="Evans J."/>
            <person name="Harwood S."/>
            <person name="Rohrmann G.F."/>
        </authorList>
    </citation>
    <scope>NUCLEOTIDE SEQUENCE [LARGE SCALE GENOMIC DNA]</scope>
</reference>
<dbReference type="EMBL" id="D13768">
    <property type="protein sequence ID" value="BAA02911.1"/>
    <property type="molecule type" value="Genomic_DNA"/>
</dbReference>
<dbReference type="EMBL" id="U75930">
    <property type="protein sequence ID" value="AAC59092.1"/>
    <property type="molecule type" value="Genomic_DNA"/>
</dbReference>
<dbReference type="RefSeq" id="NP_046249.1">
    <property type="nucleotide sequence ID" value="NC_001875.2"/>
</dbReference>
<dbReference type="SMR" id="Q06372"/>
<dbReference type="KEGG" id="vg:912106"/>
<dbReference type="OrthoDB" id="8905at10239"/>
<dbReference type="Proteomes" id="UP000009248">
    <property type="component" value="Genome"/>
</dbReference>
<dbReference type="InterPro" id="IPR007879">
    <property type="entry name" value="Baculo_p33"/>
</dbReference>
<dbReference type="Pfam" id="PF05214">
    <property type="entry name" value="Baculo_p33"/>
    <property type="match status" value="1"/>
</dbReference>
<feature type="chain" id="PRO_0000132897" description="33 kDa early protein">
    <location>
        <begin position="1"/>
        <end position="282"/>
    </location>
</feature>
<protein>
    <recommendedName>
        <fullName>33 kDa early protein</fullName>
    </recommendedName>
    <alternativeName>
        <fullName>p33</fullName>
    </alternativeName>
</protein>